<comment type="function">
    <text evidence="1">Reversibly transfers an adenylyl group from ATP to 4'-phosphopantetheine, yielding dephospho-CoA (dPCoA) and pyrophosphate.</text>
</comment>
<comment type="catalytic activity">
    <reaction evidence="1">
        <text>(R)-4'-phosphopantetheine + ATP + H(+) = 3'-dephospho-CoA + diphosphate</text>
        <dbReference type="Rhea" id="RHEA:19801"/>
        <dbReference type="ChEBI" id="CHEBI:15378"/>
        <dbReference type="ChEBI" id="CHEBI:30616"/>
        <dbReference type="ChEBI" id="CHEBI:33019"/>
        <dbReference type="ChEBI" id="CHEBI:57328"/>
        <dbReference type="ChEBI" id="CHEBI:61723"/>
        <dbReference type="EC" id="2.7.7.3"/>
    </reaction>
</comment>
<comment type="cofactor">
    <cofactor evidence="1">
        <name>Mg(2+)</name>
        <dbReference type="ChEBI" id="CHEBI:18420"/>
    </cofactor>
</comment>
<comment type="pathway">
    <text evidence="1">Cofactor biosynthesis; coenzyme A biosynthesis; CoA from (R)-pantothenate: step 4/5.</text>
</comment>
<comment type="subunit">
    <text evidence="1">Homohexamer.</text>
</comment>
<comment type="subcellular location">
    <subcellularLocation>
        <location evidence="1">Cytoplasm</location>
    </subcellularLocation>
</comment>
<comment type="similarity">
    <text evidence="1">Belongs to the bacterial CoaD family.</text>
</comment>
<gene>
    <name evidence="1" type="primary">coaD</name>
    <name type="ordered locus">Desal_2411</name>
</gene>
<protein>
    <recommendedName>
        <fullName evidence="1">Phosphopantetheine adenylyltransferase</fullName>
        <ecNumber evidence="1">2.7.7.3</ecNumber>
    </recommendedName>
    <alternativeName>
        <fullName evidence="1">Dephospho-CoA pyrophosphorylase</fullName>
    </alternativeName>
    <alternativeName>
        <fullName evidence="1">Pantetheine-phosphate adenylyltransferase</fullName>
        <shortName evidence="1">PPAT</shortName>
    </alternativeName>
</protein>
<evidence type="ECO:0000255" key="1">
    <source>
        <dbReference type="HAMAP-Rule" id="MF_00151"/>
    </source>
</evidence>
<accession>C6BXG1</accession>
<reference key="1">
    <citation type="submission" date="2009-06" db="EMBL/GenBank/DDBJ databases">
        <title>Complete sequence of Desulfovibrio salexigens DSM 2638.</title>
        <authorList>
            <consortium name="US DOE Joint Genome Institute"/>
            <person name="Lucas S."/>
            <person name="Copeland A."/>
            <person name="Lapidus A."/>
            <person name="Glavina del Rio T."/>
            <person name="Tice H."/>
            <person name="Bruce D."/>
            <person name="Goodwin L."/>
            <person name="Pitluck S."/>
            <person name="Munk A.C."/>
            <person name="Brettin T."/>
            <person name="Detter J.C."/>
            <person name="Han C."/>
            <person name="Tapia R."/>
            <person name="Larimer F."/>
            <person name="Land M."/>
            <person name="Hauser L."/>
            <person name="Kyrpides N."/>
            <person name="Anderson I."/>
            <person name="Wall J.D."/>
            <person name="Arkin A.P."/>
            <person name="Dehal P."/>
            <person name="Chivian D."/>
            <person name="Giles B."/>
            <person name="Hazen T.C."/>
        </authorList>
    </citation>
    <scope>NUCLEOTIDE SEQUENCE [LARGE SCALE GENOMIC DNA]</scope>
    <source>
        <strain>ATCC 14822 / DSM 2638 / NCIMB 8403 / VKM B-1763</strain>
    </source>
</reference>
<feature type="chain" id="PRO_1000203416" description="Phosphopantetheine adenylyltransferase">
    <location>
        <begin position="1"/>
        <end position="166"/>
    </location>
</feature>
<feature type="binding site" evidence="1">
    <location>
        <begin position="14"/>
        <end position="15"/>
    </location>
    <ligand>
        <name>ATP</name>
        <dbReference type="ChEBI" id="CHEBI:30616"/>
    </ligand>
</feature>
<feature type="binding site" evidence="1">
    <location>
        <position position="14"/>
    </location>
    <ligand>
        <name>substrate</name>
    </ligand>
</feature>
<feature type="binding site" evidence="1">
    <location>
        <position position="22"/>
    </location>
    <ligand>
        <name>ATP</name>
        <dbReference type="ChEBI" id="CHEBI:30616"/>
    </ligand>
</feature>
<feature type="binding site" evidence="1">
    <location>
        <position position="46"/>
    </location>
    <ligand>
        <name>substrate</name>
    </ligand>
</feature>
<feature type="binding site" evidence="1">
    <location>
        <position position="78"/>
    </location>
    <ligand>
        <name>substrate</name>
    </ligand>
</feature>
<feature type="binding site" evidence="1">
    <location>
        <position position="92"/>
    </location>
    <ligand>
        <name>substrate</name>
    </ligand>
</feature>
<feature type="binding site" evidence="1">
    <location>
        <begin position="93"/>
        <end position="95"/>
    </location>
    <ligand>
        <name>ATP</name>
        <dbReference type="ChEBI" id="CHEBI:30616"/>
    </ligand>
</feature>
<feature type="binding site" evidence="1">
    <location>
        <position position="103"/>
    </location>
    <ligand>
        <name>ATP</name>
        <dbReference type="ChEBI" id="CHEBI:30616"/>
    </ligand>
</feature>
<feature type="binding site" evidence="1">
    <location>
        <begin position="128"/>
        <end position="134"/>
    </location>
    <ligand>
        <name>ATP</name>
        <dbReference type="ChEBI" id="CHEBI:30616"/>
    </ligand>
</feature>
<feature type="site" description="Transition state stabilizer" evidence="1">
    <location>
        <position position="22"/>
    </location>
</feature>
<proteinExistence type="inferred from homology"/>
<keyword id="KW-0067">ATP-binding</keyword>
<keyword id="KW-0173">Coenzyme A biosynthesis</keyword>
<keyword id="KW-0963">Cytoplasm</keyword>
<keyword id="KW-0460">Magnesium</keyword>
<keyword id="KW-0547">Nucleotide-binding</keyword>
<keyword id="KW-0548">Nucleotidyltransferase</keyword>
<keyword id="KW-1185">Reference proteome</keyword>
<keyword id="KW-0808">Transferase</keyword>
<organism>
    <name type="scientific">Maridesulfovibrio salexigens (strain ATCC 14822 / DSM 2638 / NCIMB 8403 / VKM B-1763)</name>
    <name type="common">Desulfovibrio salexigens</name>
    <dbReference type="NCBI Taxonomy" id="526222"/>
    <lineage>
        <taxon>Bacteria</taxon>
        <taxon>Pseudomonadati</taxon>
        <taxon>Thermodesulfobacteriota</taxon>
        <taxon>Desulfovibrionia</taxon>
        <taxon>Desulfovibrionales</taxon>
        <taxon>Desulfovibrionaceae</taxon>
        <taxon>Maridesulfovibrio</taxon>
    </lineage>
</organism>
<dbReference type="EC" id="2.7.7.3" evidence="1"/>
<dbReference type="EMBL" id="CP001649">
    <property type="protein sequence ID" value="ACS80467.1"/>
    <property type="molecule type" value="Genomic_DNA"/>
</dbReference>
<dbReference type="RefSeq" id="WP_015852283.1">
    <property type="nucleotide sequence ID" value="NC_012881.1"/>
</dbReference>
<dbReference type="SMR" id="C6BXG1"/>
<dbReference type="STRING" id="526222.Desal_2411"/>
<dbReference type="KEGG" id="dsa:Desal_2411"/>
<dbReference type="eggNOG" id="COG0669">
    <property type="taxonomic scope" value="Bacteria"/>
</dbReference>
<dbReference type="HOGENOM" id="CLU_100149_0_1_7"/>
<dbReference type="OrthoDB" id="9806661at2"/>
<dbReference type="UniPathway" id="UPA00241">
    <property type="reaction ID" value="UER00355"/>
</dbReference>
<dbReference type="Proteomes" id="UP000002601">
    <property type="component" value="Chromosome"/>
</dbReference>
<dbReference type="GO" id="GO:0005737">
    <property type="term" value="C:cytoplasm"/>
    <property type="evidence" value="ECO:0007669"/>
    <property type="project" value="UniProtKB-SubCell"/>
</dbReference>
<dbReference type="GO" id="GO:0005524">
    <property type="term" value="F:ATP binding"/>
    <property type="evidence" value="ECO:0007669"/>
    <property type="project" value="UniProtKB-KW"/>
</dbReference>
<dbReference type="GO" id="GO:0004595">
    <property type="term" value="F:pantetheine-phosphate adenylyltransferase activity"/>
    <property type="evidence" value="ECO:0007669"/>
    <property type="project" value="UniProtKB-UniRule"/>
</dbReference>
<dbReference type="GO" id="GO:0015937">
    <property type="term" value="P:coenzyme A biosynthetic process"/>
    <property type="evidence" value="ECO:0007669"/>
    <property type="project" value="UniProtKB-UniRule"/>
</dbReference>
<dbReference type="CDD" id="cd02163">
    <property type="entry name" value="PPAT"/>
    <property type="match status" value="1"/>
</dbReference>
<dbReference type="Gene3D" id="3.40.50.620">
    <property type="entry name" value="HUPs"/>
    <property type="match status" value="1"/>
</dbReference>
<dbReference type="HAMAP" id="MF_00151">
    <property type="entry name" value="PPAT_bact"/>
    <property type="match status" value="1"/>
</dbReference>
<dbReference type="InterPro" id="IPR004821">
    <property type="entry name" value="Cyt_trans-like"/>
</dbReference>
<dbReference type="InterPro" id="IPR001980">
    <property type="entry name" value="PPAT"/>
</dbReference>
<dbReference type="InterPro" id="IPR014729">
    <property type="entry name" value="Rossmann-like_a/b/a_fold"/>
</dbReference>
<dbReference type="NCBIfam" id="TIGR01510">
    <property type="entry name" value="coaD_prev_kdtB"/>
    <property type="match status" value="1"/>
</dbReference>
<dbReference type="NCBIfam" id="TIGR00125">
    <property type="entry name" value="cyt_tran_rel"/>
    <property type="match status" value="1"/>
</dbReference>
<dbReference type="PANTHER" id="PTHR21342">
    <property type="entry name" value="PHOSPHOPANTETHEINE ADENYLYLTRANSFERASE"/>
    <property type="match status" value="1"/>
</dbReference>
<dbReference type="PANTHER" id="PTHR21342:SF1">
    <property type="entry name" value="PHOSPHOPANTETHEINE ADENYLYLTRANSFERASE"/>
    <property type="match status" value="1"/>
</dbReference>
<dbReference type="Pfam" id="PF01467">
    <property type="entry name" value="CTP_transf_like"/>
    <property type="match status" value="1"/>
</dbReference>
<dbReference type="PRINTS" id="PR01020">
    <property type="entry name" value="LPSBIOSNTHSS"/>
</dbReference>
<dbReference type="SUPFAM" id="SSF52374">
    <property type="entry name" value="Nucleotidylyl transferase"/>
    <property type="match status" value="1"/>
</dbReference>
<sequence>MAEVKPVTAVFPGTFDPFTRGHFSLVMRGIKTFHKVIVAVAGSTSKNTKFSLEERVDMAKRIFEHHPQVEVDSFDGLLVHYVEQSPANVIMRGLRAVSDFEYEFQMALMNRRLDNDIQTVFLMTDYKWMYLSSSIIKDVAVNGGDIKGLVPRQIYDEVIERLVPGK</sequence>
<name>COAD_MARSD</name>